<evidence type="ECO:0000255" key="1">
    <source>
        <dbReference type="HAMAP-Rule" id="MF_00695"/>
    </source>
</evidence>
<keyword id="KW-0997">Cell inner membrane</keyword>
<keyword id="KW-1003">Cell membrane</keyword>
<keyword id="KW-0963">Cytoplasm</keyword>
<keyword id="KW-0472">Membrane</keyword>
<name>HFLD_ALIFM</name>
<reference key="1">
    <citation type="submission" date="2008-08" db="EMBL/GenBank/DDBJ databases">
        <title>Complete sequence of Vibrio fischeri strain MJ11.</title>
        <authorList>
            <person name="Mandel M.J."/>
            <person name="Stabb E.V."/>
            <person name="Ruby E.G."/>
            <person name="Ferriera S."/>
            <person name="Johnson J."/>
            <person name="Kravitz S."/>
            <person name="Beeson K."/>
            <person name="Sutton G."/>
            <person name="Rogers Y.-H."/>
            <person name="Friedman R."/>
            <person name="Frazier M."/>
            <person name="Venter J.C."/>
        </authorList>
    </citation>
    <scope>NUCLEOTIDE SEQUENCE [LARGE SCALE GENOMIC DNA]</scope>
    <source>
        <strain>MJ11</strain>
    </source>
</reference>
<dbReference type="EMBL" id="CP001139">
    <property type="protein sequence ID" value="ACH65721.1"/>
    <property type="molecule type" value="Genomic_DNA"/>
</dbReference>
<dbReference type="RefSeq" id="WP_005420216.1">
    <property type="nucleotide sequence ID" value="NC_011184.1"/>
</dbReference>
<dbReference type="SMR" id="B5FG84"/>
<dbReference type="KEGG" id="vfm:VFMJ11_1913"/>
<dbReference type="HOGENOM" id="CLU_098920_0_0_6"/>
<dbReference type="Proteomes" id="UP000001857">
    <property type="component" value="Chromosome I"/>
</dbReference>
<dbReference type="GO" id="GO:0005737">
    <property type="term" value="C:cytoplasm"/>
    <property type="evidence" value="ECO:0007669"/>
    <property type="project" value="UniProtKB-SubCell"/>
</dbReference>
<dbReference type="GO" id="GO:0005886">
    <property type="term" value="C:plasma membrane"/>
    <property type="evidence" value="ECO:0007669"/>
    <property type="project" value="UniProtKB-SubCell"/>
</dbReference>
<dbReference type="Gene3D" id="1.10.3890.10">
    <property type="entry name" value="HflD-like"/>
    <property type="match status" value="1"/>
</dbReference>
<dbReference type="HAMAP" id="MF_00695">
    <property type="entry name" value="HflD_protein"/>
    <property type="match status" value="1"/>
</dbReference>
<dbReference type="InterPro" id="IPR007451">
    <property type="entry name" value="HflD"/>
</dbReference>
<dbReference type="InterPro" id="IPR035932">
    <property type="entry name" value="HflD-like_sf"/>
</dbReference>
<dbReference type="NCBIfam" id="NF001246">
    <property type="entry name" value="PRK00218.1-2"/>
    <property type="match status" value="1"/>
</dbReference>
<dbReference type="NCBIfam" id="NF001248">
    <property type="entry name" value="PRK00218.1-4"/>
    <property type="match status" value="1"/>
</dbReference>
<dbReference type="PANTHER" id="PTHR38100">
    <property type="entry name" value="HIGH FREQUENCY LYSOGENIZATION PROTEIN HFLD"/>
    <property type="match status" value="1"/>
</dbReference>
<dbReference type="PANTHER" id="PTHR38100:SF1">
    <property type="entry name" value="HIGH FREQUENCY LYSOGENIZATION PROTEIN HFLD"/>
    <property type="match status" value="1"/>
</dbReference>
<dbReference type="Pfam" id="PF04356">
    <property type="entry name" value="DUF489"/>
    <property type="match status" value="1"/>
</dbReference>
<dbReference type="SUPFAM" id="SSF101322">
    <property type="entry name" value="YcfC-like"/>
    <property type="match status" value="1"/>
</dbReference>
<sequence length="205" mass="22857">MANTLFDRTIAFAGICQAASLVQKMAKDGHCDQEAFDTAIQSILETNPSNTVAVYGKESNLRIGLECLVRDFDNTPSGSELTRYLISLMALERKLAGHRDGMSKLGERIGTIERQLEHFDIHDEQMLSNIASIYLDVISPMGPRIQVTGTPSVLQQPMTQHKVRALLLSGIRSAVLWRQVGGKRRHLIFGRKKMVEQAKIILARI</sequence>
<protein>
    <recommendedName>
        <fullName evidence="1">High frequency lysogenization protein HflD homolog</fullName>
    </recommendedName>
</protein>
<feature type="chain" id="PRO_1000132307" description="High frequency lysogenization protein HflD homolog">
    <location>
        <begin position="1"/>
        <end position="205"/>
    </location>
</feature>
<organism>
    <name type="scientific">Aliivibrio fischeri (strain MJ11)</name>
    <name type="common">Vibrio fischeri</name>
    <dbReference type="NCBI Taxonomy" id="388396"/>
    <lineage>
        <taxon>Bacteria</taxon>
        <taxon>Pseudomonadati</taxon>
        <taxon>Pseudomonadota</taxon>
        <taxon>Gammaproteobacteria</taxon>
        <taxon>Vibrionales</taxon>
        <taxon>Vibrionaceae</taxon>
        <taxon>Aliivibrio</taxon>
    </lineage>
</organism>
<accession>B5FG84</accession>
<comment type="subcellular location">
    <subcellularLocation>
        <location>Cytoplasm</location>
    </subcellularLocation>
    <subcellularLocation>
        <location evidence="1">Cell inner membrane</location>
        <topology evidence="1">Peripheral membrane protein</topology>
        <orientation evidence="1">Cytoplasmic side</orientation>
    </subcellularLocation>
</comment>
<comment type="similarity">
    <text evidence="1">Belongs to the HflD family.</text>
</comment>
<gene>
    <name evidence="1" type="primary">hflD</name>
    <name type="ordered locus">VFMJ11_1913</name>
</gene>
<proteinExistence type="inferred from homology"/>